<accession>B9VVJ6</accession>
<organism evidence="8">
    <name type="scientific">Trypanosoma brucei brucei</name>
    <dbReference type="NCBI Taxonomy" id="5702"/>
    <lineage>
        <taxon>Eukaryota</taxon>
        <taxon>Discoba</taxon>
        <taxon>Euglenozoa</taxon>
        <taxon>Kinetoplastea</taxon>
        <taxon>Metakinetoplastina</taxon>
        <taxon>Trypanosomatida</taxon>
        <taxon>Trypanosomatidae</taxon>
        <taxon>Trypanosoma</taxon>
    </lineage>
</organism>
<sequence>MSVELRVGNRFRIGQKIGSGSFGEIFRGTNIQTGDPVAIKLEQVKTRHPQLAFEARFYRVLNAGGGVVGIPNVLYHGVEGEFNVMVIDLLGPSLEDLFSFCGRRLSLKTTLMLAEQMIARIEFVHSKSIIHRDIKPDNFLMGTGKKGHHVYIIDFGLAKKYRDARTHQHIPYKEGKSLTGTARYCSINTHIGIEQSRRDDLEGIGYILMYFLRGSLPWQGLKAHTKQEKYARISDRKQTTSVETLCRSFPAEFAAYLNYTRSLHFEDKPDYSYLKRLFRELFVREGYHVDYVFDWTLKRIHDTLQEGRADQQQQQQQQQQRRGSEKEDEHPV</sequence>
<keyword id="KW-0067">ATP-binding</keyword>
<keyword id="KW-0418">Kinase</keyword>
<keyword id="KW-0460">Magnesium</keyword>
<keyword id="KW-0479">Metal-binding</keyword>
<keyword id="KW-0547">Nucleotide-binding</keyword>
<keyword id="KW-0723">Serine/threonine-protein kinase</keyword>
<keyword id="KW-0808">Transferase</keyword>
<protein>
    <recommendedName>
        <fullName evidence="5">Casein kinase I isoform 2</fullName>
        <ecNumber evidence="3 4">2.7.11.1</ecNumber>
    </recommendedName>
</protein>
<proteinExistence type="evidence at protein level"/>
<name>CK12_TRYBB</name>
<gene>
    <name evidence="5" type="primary">CK1.2</name>
    <name evidence="5" type="synonym">Tb927.5.800</name>
</gene>
<comment type="function">
    <text evidence="3 4">Serine/threonine protein kinase (PubMed:19450734, PubMed:27002830). May phosphorylate ZC3H11 during unstressed conditions, leading to proteasome-dependent degradation of ZC3H11 (PubMed:27002830).</text>
</comment>
<comment type="catalytic activity">
    <reaction evidence="3 4">
        <text>L-seryl-[protein] + ATP = O-phospho-L-seryl-[protein] + ADP + H(+)</text>
        <dbReference type="Rhea" id="RHEA:17989"/>
        <dbReference type="Rhea" id="RHEA-COMP:9863"/>
        <dbReference type="Rhea" id="RHEA-COMP:11604"/>
        <dbReference type="ChEBI" id="CHEBI:15378"/>
        <dbReference type="ChEBI" id="CHEBI:29999"/>
        <dbReference type="ChEBI" id="CHEBI:30616"/>
        <dbReference type="ChEBI" id="CHEBI:83421"/>
        <dbReference type="ChEBI" id="CHEBI:456216"/>
        <dbReference type="EC" id="2.7.11.1"/>
    </reaction>
    <physiologicalReaction direction="left-to-right" evidence="3 4">
        <dbReference type="Rhea" id="RHEA:17990"/>
    </physiologicalReaction>
</comment>
<comment type="catalytic activity">
    <reaction evidence="3 4">
        <text>L-threonyl-[protein] + ATP = O-phospho-L-threonyl-[protein] + ADP + H(+)</text>
        <dbReference type="Rhea" id="RHEA:46608"/>
        <dbReference type="Rhea" id="RHEA-COMP:11060"/>
        <dbReference type="Rhea" id="RHEA-COMP:11605"/>
        <dbReference type="ChEBI" id="CHEBI:15378"/>
        <dbReference type="ChEBI" id="CHEBI:30013"/>
        <dbReference type="ChEBI" id="CHEBI:30616"/>
        <dbReference type="ChEBI" id="CHEBI:61977"/>
        <dbReference type="ChEBI" id="CHEBI:456216"/>
        <dbReference type="EC" id="2.7.11.1"/>
    </reaction>
    <physiologicalReaction direction="left-to-right" evidence="3 4">
        <dbReference type="Rhea" id="RHEA:46609"/>
    </physiologicalReaction>
</comment>
<comment type="cofactor">
    <cofactor evidence="3 4">
        <name>Mg(2+)</name>
        <dbReference type="ChEBI" id="CHEBI:18420"/>
    </cofactor>
</comment>
<comment type="biophysicochemical properties">
    <temperatureDependence>
        <text evidence="4">Optimum temperature is about 27 degrees Celsius. Loses activity at 41 degrees Celsius.</text>
    </temperatureDependence>
</comment>
<comment type="disruption phenotype">
    <text evidence="3 4">RNAi-mediated knockdown in the bloodstream form inhibits cell population growth and leads to gross morphological changes and multinucleation (PubMed:19450734). RNAi-mediated knockdown in the procyclic form inhibits cell population growth and decreases ZC3H11 phosphorylation (PubMed:27002830).</text>
</comment>
<comment type="similarity">
    <text evidence="7">Belongs to the protein kinase superfamily. Ser/Thr protein kinase family.</text>
</comment>
<dbReference type="EC" id="2.7.11.1" evidence="3 4"/>
<dbReference type="EMBL" id="FJ608535">
    <property type="protein sequence ID" value="ACM68937.1"/>
    <property type="molecule type" value="Genomic_DNA"/>
</dbReference>
<dbReference type="SMR" id="B9VVJ6"/>
<dbReference type="OMA" id="IFDWTFL"/>
<dbReference type="GO" id="GO:0005524">
    <property type="term" value="F:ATP binding"/>
    <property type="evidence" value="ECO:0007669"/>
    <property type="project" value="UniProtKB-KW"/>
</dbReference>
<dbReference type="GO" id="GO:0046872">
    <property type="term" value="F:metal ion binding"/>
    <property type="evidence" value="ECO:0007669"/>
    <property type="project" value="UniProtKB-KW"/>
</dbReference>
<dbReference type="GO" id="GO:0004674">
    <property type="term" value="F:protein serine/threonine kinase activity"/>
    <property type="evidence" value="ECO:0000314"/>
    <property type="project" value="UniProtKB"/>
</dbReference>
<dbReference type="GO" id="GO:2000058">
    <property type="term" value="P:regulation of ubiquitin-dependent protein catabolic process"/>
    <property type="evidence" value="ECO:0000315"/>
    <property type="project" value="UniProtKB"/>
</dbReference>
<dbReference type="CDD" id="cd14125">
    <property type="entry name" value="STKc_CK1_delta_epsilon"/>
    <property type="match status" value="1"/>
</dbReference>
<dbReference type="FunFam" id="1.10.510.10:FF:000635">
    <property type="entry name" value="Casein kinase I"/>
    <property type="match status" value="1"/>
</dbReference>
<dbReference type="Gene3D" id="1.10.510.10">
    <property type="entry name" value="Transferase(Phosphotransferase) domain 1"/>
    <property type="match status" value="1"/>
</dbReference>
<dbReference type="InterPro" id="IPR050235">
    <property type="entry name" value="CK1_Ser-Thr_kinase"/>
</dbReference>
<dbReference type="InterPro" id="IPR011009">
    <property type="entry name" value="Kinase-like_dom_sf"/>
</dbReference>
<dbReference type="InterPro" id="IPR000719">
    <property type="entry name" value="Prot_kinase_dom"/>
</dbReference>
<dbReference type="InterPro" id="IPR017441">
    <property type="entry name" value="Protein_kinase_ATP_BS"/>
</dbReference>
<dbReference type="InterPro" id="IPR008271">
    <property type="entry name" value="Ser/Thr_kinase_AS"/>
</dbReference>
<dbReference type="PANTHER" id="PTHR11909">
    <property type="entry name" value="CASEIN KINASE-RELATED"/>
    <property type="match status" value="1"/>
</dbReference>
<dbReference type="Pfam" id="PF00069">
    <property type="entry name" value="Pkinase"/>
    <property type="match status" value="1"/>
</dbReference>
<dbReference type="SMART" id="SM00220">
    <property type="entry name" value="S_TKc"/>
    <property type="match status" value="1"/>
</dbReference>
<dbReference type="SUPFAM" id="SSF56112">
    <property type="entry name" value="Protein kinase-like (PK-like)"/>
    <property type="match status" value="1"/>
</dbReference>
<dbReference type="PROSITE" id="PS00107">
    <property type="entry name" value="PROTEIN_KINASE_ATP"/>
    <property type="match status" value="1"/>
</dbReference>
<dbReference type="PROSITE" id="PS50011">
    <property type="entry name" value="PROTEIN_KINASE_DOM"/>
    <property type="match status" value="1"/>
</dbReference>
<dbReference type="PROSITE" id="PS00108">
    <property type="entry name" value="PROTEIN_KINASE_ST"/>
    <property type="match status" value="1"/>
</dbReference>
<reference evidence="8" key="1">
    <citation type="journal article" date="2009" name="Mol. Biochem. Parasitol.">
        <title>Casein kinase 1 isoform 2 is essential for bloodstream form Trypanosoma brucei.</title>
        <authorList>
            <person name="Urbaniak M.D."/>
        </authorList>
    </citation>
    <scope>NUCLEOTIDE SEQUENCE [MRNA]</scope>
    <scope>FUNCTION</scope>
    <scope>CATALYTIC ACTIVITY</scope>
    <scope>COFACTOR</scope>
    <scope>DISRUPTION PHENOTYPE</scope>
    <scope>MUTAGENESIS OF ASP-133 AND 299-ARG--VAL-332</scope>
    <source>
        <strain evidence="8">427</strain>
    </source>
</reference>
<reference evidence="7" key="2">
    <citation type="journal article" date="2016" name="PLoS Pathog.">
        <title>Regulating a Post-Transcriptional Regulator: Protein Phosphorylation, Degradation and Translational Blockage in Control of the Trypanosome Stress-Response RNA-Binding Protein ZC3H11.</title>
        <authorList>
            <person name="Minia I."/>
            <person name="Clayton C."/>
        </authorList>
    </citation>
    <scope>FUNCTION</scope>
    <scope>CATALYTIC ACTIVITY</scope>
    <scope>COFACTOR</scope>
    <scope>BIOPHYSICOCHEMICAL PROPERTIES</scope>
    <scope>DISRUPTION PHENOTYPE</scope>
    <source>
        <strain evidence="6">427</strain>
    </source>
</reference>
<feature type="chain" id="PRO_0000451924" description="Casein kinase I isoform 2">
    <location>
        <begin position="1"/>
        <end position="332"/>
    </location>
</feature>
<feature type="domain" description="Protein kinase" evidence="1">
    <location>
        <begin position="11"/>
        <end position="282"/>
    </location>
</feature>
<feature type="region of interest" description="Disordered" evidence="2">
    <location>
        <begin position="306"/>
        <end position="332"/>
    </location>
</feature>
<feature type="compositionally biased region" description="Low complexity" evidence="2">
    <location>
        <begin position="311"/>
        <end position="320"/>
    </location>
</feature>
<feature type="compositionally biased region" description="Basic and acidic residues" evidence="2">
    <location>
        <begin position="322"/>
        <end position="332"/>
    </location>
</feature>
<feature type="active site" description="Proton acceptor" evidence="1">
    <location>
        <position position="133"/>
    </location>
</feature>
<feature type="binding site" evidence="1">
    <location>
        <begin position="17"/>
        <end position="25"/>
    </location>
    <ligand>
        <name>ATP</name>
        <dbReference type="ChEBI" id="CHEBI:30616"/>
    </ligand>
</feature>
<feature type="binding site" evidence="1">
    <location>
        <position position="40"/>
    </location>
    <ligand>
        <name>ATP</name>
        <dbReference type="ChEBI" id="CHEBI:30616"/>
    </ligand>
</feature>
<feature type="mutagenesis site" description="Abolishes protein kinase activity; when associated with 299-R--V-332 DEL.">
    <original>D</original>
    <variation>A</variation>
    <location>
        <position position="133"/>
    </location>
</feature>
<feature type="mutagenesis site" description="Catalytic active. Abolishes protein kinase activity; when associated with A-133." evidence="3">
    <location>
        <begin position="299"/>
        <end position="332"/>
    </location>
</feature>
<evidence type="ECO:0000255" key="1">
    <source>
        <dbReference type="PROSITE-ProRule" id="PRU00159"/>
    </source>
</evidence>
<evidence type="ECO:0000256" key="2">
    <source>
        <dbReference type="SAM" id="MobiDB-lite"/>
    </source>
</evidence>
<evidence type="ECO:0000269" key="3">
    <source>
    </source>
</evidence>
<evidence type="ECO:0000269" key="4">
    <source>
    </source>
</evidence>
<evidence type="ECO:0000303" key="5">
    <source>
    </source>
</evidence>
<evidence type="ECO:0000303" key="6">
    <source>
    </source>
</evidence>
<evidence type="ECO:0000305" key="7"/>
<evidence type="ECO:0000312" key="8">
    <source>
        <dbReference type="EMBL" id="ACM68937.1"/>
    </source>
</evidence>